<reference key="1">
    <citation type="journal article" date="2007" name="Genome Biol.">
        <title>Characterization and modeling of the Haemophilus influenzae core and supragenomes based on the complete genomic sequences of Rd and 12 clinical nontypeable strains.</title>
        <authorList>
            <person name="Hogg J.S."/>
            <person name="Hu F.Z."/>
            <person name="Janto B."/>
            <person name="Boissy R."/>
            <person name="Hayes J."/>
            <person name="Keefe R."/>
            <person name="Post J.C."/>
            <person name="Ehrlich G.D."/>
        </authorList>
    </citation>
    <scope>NUCLEOTIDE SEQUENCE [LARGE SCALE GENOMIC DNA]</scope>
    <source>
        <strain>PittGG</strain>
    </source>
</reference>
<organism>
    <name type="scientific">Haemophilus influenzae (strain PittGG)</name>
    <dbReference type="NCBI Taxonomy" id="374931"/>
    <lineage>
        <taxon>Bacteria</taxon>
        <taxon>Pseudomonadati</taxon>
        <taxon>Pseudomonadota</taxon>
        <taxon>Gammaproteobacteria</taxon>
        <taxon>Pasteurellales</taxon>
        <taxon>Pasteurellaceae</taxon>
        <taxon>Haemophilus</taxon>
    </lineage>
</organism>
<comment type="function">
    <text evidence="1">Produces ATP from ADP in the presence of a proton gradient across the membrane. The catalytic sites are hosted primarily by the beta subunits.</text>
</comment>
<comment type="catalytic activity">
    <reaction evidence="1">
        <text>ATP + H2O + 4 H(+)(in) = ADP + phosphate + 5 H(+)(out)</text>
        <dbReference type="Rhea" id="RHEA:57720"/>
        <dbReference type="ChEBI" id="CHEBI:15377"/>
        <dbReference type="ChEBI" id="CHEBI:15378"/>
        <dbReference type="ChEBI" id="CHEBI:30616"/>
        <dbReference type="ChEBI" id="CHEBI:43474"/>
        <dbReference type="ChEBI" id="CHEBI:456216"/>
        <dbReference type="EC" id="7.1.2.2"/>
    </reaction>
</comment>
<comment type="subunit">
    <text evidence="1">F-type ATPases have 2 components, CF(1) - the catalytic core - and CF(0) - the membrane proton channel. CF(1) has five subunits: alpha(3), beta(3), gamma(1), delta(1), epsilon(1). CF(0) has three main subunits: a(1), b(2) and c(9-12). The alpha and beta chains form an alternating ring which encloses part of the gamma chain. CF(1) is attached to CF(0) by a central stalk formed by the gamma and epsilon chains, while a peripheral stalk is formed by the delta and b chains.</text>
</comment>
<comment type="subcellular location">
    <subcellularLocation>
        <location evidence="1">Cell inner membrane</location>
        <topology evidence="1">Peripheral membrane protein</topology>
    </subcellularLocation>
</comment>
<comment type="similarity">
    <text evidence="1">Belongs to the ATPase alpha/beta chains family.</text>
</comment>
<proteinExistence type="inferred from homology"/>
<sequence length="457" mass="49817">MSAGKIVQIIGAVIDVEFPQDAVPKVYDALKVESGLTLEVQQQLGGGVVRCIALGTSDGLKRGLKVENTNNPIQVPVGTKTLGRIVNVLGEPIDEQGAIGEEERWAIHRSAPSYEEQSNSTELLETGIKVIDLICPFAKGGKVGLFGGAGVGKTVNMMELIRNIAIEHSGYSVFAGVGERTREGNDFYHEMKDSNVLDKVSLVYGQMNEPPGNRLRVALTGLTMAEKFRDEGRDVLFFVDNIYRYTLAGTEVSALLGRMPSAVGYQPTLAEEMGVLQERITSTKTGSITSVQAVYVPADDLTDPSPATTFAHLDSTVVLSRQIASLGIYPAVDPLDSTSRQLDPLVVGQEHYDVARGVQGILQRYKELKDIIAILGMDELSEEDKLVVARARKIERFLSQPFFVAEVFTGSPGKYVTLKDTIRGFKGILEGEYDHIPEQAFYMVGSIDEVLEKAKNM</sequence>
<feature type="chain" id="PRO_1000055119" description="ATP synthase subunit beta">
    <location>
        <begin position="1"/>
        <end position="457"/>
    </location>
</feature>
<feature type="binding site" evidence="1">
    <location>
        <begin position="147"/>
        <end position="154"/>
    </location>
    <ligand>
        <name>ATP</name>
        <dbReference type="ChEBI" id="CHEBI:30616"/>
    </ligand>
</feature>
<evidence type="ECO:0000255" key="1">
    <source>
        <dbReference type="HAMAP-Rule" id="MF_01347"/>
    </source>
</evidence>
<keyword id="KW-0066">ATP synthesis</keyword>
<keyword id="KW-0067">ATP-binding</keyword>
<keyword id="KW-0997">Cell inner membrane</keyword>
<keyword id="KW-1003">Cell membrane</keyword>
<keyword id="KW-0139">CF(1)</keyword>
<keyword id="KW-0375">Hydrogen ion transport</keyword>
<keyword id="KW-0406">Ion transport</keyword>
<keyword id="KW-0472">Membrane</keyword>
<keyword id="KW-0547">Nucleotide-binding</keyword>
<keyword id="KW-1278">Translocase</keyword>
<keyword id="KW-0813">Transport</keyword>
<name>ATPB_HAEIG</name>
<gene>
    <name evidence="1" type="primary">atpD</name>
    <name type="ordered locus">CGSHiGG_05650</name>
</gene>
<dbReference type="EC" id="7.1.2.2" evidence="1"/>
<dbReference type="EMBL" id="CP000672">
    <property type="protein sequence ID" value="ABR00045.1"/>
    <property type="molecule type" value="Genomic_DNA"/>
</dbReference>
<dbReference type="SMR" id="A5UGY9"/>
<dbReference type="KEGG" id="hiq:CGSHiGG_05650"/>
<dbReference type="HOGENOM" id="CLU_022398_0_2_6"/>
<dbReference type="Proteomes" id="UP000001990">
    <property type="component" value="Chromosome"/>
</dbReference>
<dbReference type="GO" id="GO:0005886">
    <property type="term" value="C:plasma membrane"/>
    <property type="evidence" value="ECO:0007669"/>
    <property type="project" value="UniProtKB-SubCell"/>
</dbReference>
<dbReference type="GO" id="GO:0045259">
    <property type="term" value="C:proton-transporting ATP synthase complex"/>
    <property type="evidence" value="ECO:0007669"/>
    <property type="project" value="UniProtKB-KW"/>
</dbReference>
<dbReference type="GO" id="GO:0005524">
    <property type="term" value="F:ATP binding"/>
    <property type="evidence" value="ECO:0007669"/>
    <property type="project" value="UniProtKB-UniRule"/>
</dbReference>
<dbReference type="GO" id="GO:0016887">
    <property type="term" value="F:ATP hydrolysis activity"/>
    <property type="evidence" value="ECO:0007669"/>
    <property type="project" value="InterPro"/>
</dbReference>
<dbReference type="GO" id="GO:0046933">
    <property type="term" value="F:proton-transporting ATP synthase activity, rotational mechanism"/>
    <property type="evidence" value="ECO:0007669"/>
    <property type="project" value="UniProtKB-UniRule"/>
</dbReference>
<dbReference type="CDD" id="cd18110">
    <property type="entry name" value="ATP-synt_F1_beta_C"/>
    <property type="match status" value="1"/>
</dbReference>
<dbReference type="CDD" id="cd18115">
    <property type="entry name" value="ATP-synt_F1_beta_N"/>
    <property type="match status" value="1"/>
</dbReference>
<dbReference type="CDD" id="cd01133">
    <property type="entry name" value="F1-ATPase_beta_CD"/>
    <property type="match status" value="1"/>
</dbReference>
<dbReference type="FunFam" id="1.10.1140.10:FF:000001">
    <property type="entry name" value="ATP synthase subunit beta"/>
    <property type="match status" value="1"/>
</dbReference>
<dbReference type="FunFam" id="2.40.10.170:FF:000003">
    <property type="entry name" value="ATP synthase subunit beta"/>
    <property type="match status" value="1"/>
</dbReference>
<dbReference type="FunFam" id="3.40.50.300:FF:000004">
    <property type="entry name" value="ATP synthase subunit beta"/>
    <property type="match status" value="1"/>
</dbReference>
<dbReference type="Gene3D" id="2.40.10.170">
    <property type="match status" value="1"/>
</dbReference>
<dbReference type="Gene3D" id="1.10.1140.10">
    <property type="entry name" value="Bovine Mitochondrial F1-atpase, Atp Synthase Beta Chain, Chain D, domain 3"/>
    <property type="match status" value="1"/>
</dbReference>
<dbReference type="Gene3D" id="3.40.50.300">
    <property type="entry name" value="P-loop containing nucleotide triphosphate hydrolases"/>
    <property type="match status" value="1"/>
</dbReference>
<dbReference type="HAMAP" id="MF_01347">
    <property type="entry name" value="ATP_synth_beta_bact"/>
    <property type="match status" value="1"/>
</dbReference>
<dbReference type="InterPro" id="IPR003593">
    <property type="entry name" value="AAA+_ATPase"/>
</dbReference>
<dbReference type="InterPro" id="IPR055190">
    <property type="entry name" value="ATP-synt_VA_C"/>
</dbReference>
<dbReference type="InterPro" id="IPR005722">
    <property type="entry name" value="ATP_synth_F1_bsu"/>
</dbReference>
<dbReference type="InterPro" id="IPR020003">
    <property type="entry name" value="ATPase_a/bsu_AS"/>
</dbReference>
<dbReference type="InterPro" id="IPR050053">
    <property type="entry name" value="ATPase_alpha/beta_chains"/>
</dbReference>
<dbReference type="InterPro" id="IPR004100">
    <property type="entry name" value="ATPase_F1/V1/A1_a/bsu_N"/>
</dbReference>
<dbReference type="InterPro" id="IPR036121">
    <property type="entry name" value="ATPase_F1/V1/A1_a/bsu_N_sf"/>
</dbReference>
<dbReference type="InterPro" id="IPR000194">
    <property type="entry name" value="ATPase_F1/V1/A1_a/bsu_nucl-bd"/>
</dbReference>
<dbReference type="InterPro" id="IPR024034">
    <property type="entry name" value="ATPase_F1/V1_b/a_C"/>
</dbReference>
<dbReference type="InterPro" id="IPR027417">
    <property type="entry name" value="P-loop_NTPase"/>
</dbReference>
<dbReference type="NCBIfam" id="TIGR01039">
    <property type="entry name" value="atpD"/>
    <property type="match status" value="1"/>
</dbReference>
<dbReference type="PANTHER" id="PTHR15184">
    <property type="entry name" value="ATP SYNTHASE"/>
    <property type="match status" value="1"/>
</dbReference>
<dbReference type="PANTHER" id="PTHR15184:SF71">
    <property type="entry name" value="ATP SYNTHASE SUBUNIT BETA, MITOCHONDRIAL"/>
    <property type="match status" value="1"/>
</dbReference>
<dbReference type="Pfam" id="PF00006">
    <property type="entry name" value="ATP-synt_ab"/>
    <property type="match status" value="1"/>
</dbReference>
<dbReference type="Pfam" id="PF02874">
    <property type="entry name" value="ATP-synt_ab_N"/>
    <property type="match status" value="1"/>
</dbReference>
<dbReference type="Pfam" id="PF22919">
    <property type="entry name" value="ATP-synt_VA_C"/>
    <property type="match status" value="1"/>
</dbReference>
<dbReference type="SMART" id="SM00382">
    <property type="entry name" value="AAA"/>
    <property type="match status" value="1"/>
</dbReference>
<dbReference type="SUPFAM" id="SSF47917">
    <property type="entry name" value="C-terminal domain of alpha and beta subunits of F1 ATP synthase"/>
    <property type="match status" value="1"/>
</dbReference>
<dbReference type="SUPFAM" id="SSF50615">
    <property type="entry name" value="N-terminal domain of alpha and beta subunits of F1 ATP synthase"/>
    <property type="match status" value="1"/>
</dbReference>
<dbReference type="SUPFAM" id="SSF52540">
    <property type="entry name" value="P-loop containing nucleoside triphosphate hydrolases"/>
    <property type="match status" value="1"/>
</dbReference>
<dbReference type="PROSITE" id="PS00152">
    <property type="entry name" value="ATPASE_ALPHA_BETA"/>
    <property type="match status" value="1"/>
</dbReference>
<accession>A5UGY9</accession>
<protein>
    <recommendedName>
        <fullName evidence="1">ATP synthase subunit beta</fullName>
        <ecNumber evidence="1">7.1.2.2</ecNumber>
    </recommendedName>
    <alternativeName>
        <fullName evidence="1">ATP synthase F1 sector subunit beta</fullName>
    </alternativeName>
    <alternativeName>
        <fullName evidence="1">F-ATPase subunit beta</fullName>
    </alternativeName>
</protein>